<gene>
    <name evidence="1" type="primary">ureA</name>
</gene>
<reference key="1">
    <citation type="journal article" date="1990" name="FEMS Microbiol. Lett.">
        <title>Cloning of the genes encoding urease from Proteus vulgaris and sequencing of the structural genes.</title>
        <authorList>
            <person name="Moersdorf G."/>
            <person name="Kaltwasser H."/>
        </authorList>
    </citation>
    <scope>NUCLEOTIDE SEQUENCE [GENOMIC DNA]</scope>
    <source>
        <strain>ATCC 13315 / DSM 30118 / JCM 1668 / NBRC 3851 / NCIMB 4175 / NCTC 4175 / NRRL B-3405</strain>
    </source>
</reference>
<accession>P16124</accession>
<protein>
    <recommendedName>
        <fullName evidence="1">Urease subunit gamma</fullName>
        <ecNumber evidence="1">3.5.1.5</ecNumber>
    </recommendedName>
    <alternativeName>
        <fullName evidence="1">Urea amidohydrolase subunit gamma</fullName>
    </alternativeName>
</protein>
<feature type="chain" id="PRO_0000098027" description="Urease subunit gamma">
    <location>
        <begin position="1"/>
        <end position="100"/>
    </location>
</feature>
<organism>
    <name type="scientific">Proteus hauseri</name>
    <dbReference type="NCBI Taxonomy" id="183417"/>
    <lineage>
        <taxon>Bacteria</taxon>
        <taxon>Pseudomonadati</taxon>
        <taxon>Pseudomonadota</taxon>
        <taxon>Gammaproteobacteria</taxon>
        <taxon>Enterobacterales</taxon>
        <taxon>Morganellaceae</taxon>
        <taxon>Proteus</taxon>
    </lineage>
</organism>
<keyword id="KW-0963">Cytoplasm</keyword>
<keyword id="KW-0378">Hydrolase</keyword>
<comment type="catalytic activity">
    <reaction evidence="1">
        <text>urea + 2 H2O + H(+) = hydrogencarbonate + 2 NH4(+)</text>
        <dbReference type="Rhea" id="RHEA:20557"/>
        <dbReference type="ChEBI" id="CHEBI:15377"/>
        <dbReference type="ChEBI" id="CHEBI:15378"/>
        <dbReference type="ChEBI" id="CHEBI:16199"/>
        <dbReference type="ChEBI" id="CHEBI:17544"/>
        <dbReference type="ChEBI" id="CHEBI:28938"/>
        <dbReference type="EC" id="3.5.1.5"/>
    </reaction>
</comment>
<comment type="pathway">
    <text evidence="1">Nitrogen metabolism; urea degradation; CO(2) and NH(3) from urea (urease route): step 1/1.</text>
</comment>
<comment type="subunit">
    <text evidence="1">Heterotrimer of UreA (gamma), UreB (beta) and UreC (alpha) subunits. Three heterotrimers associate to form the active enzyme.</text>
</comment>
<comment type="subcellular location">
    <subcellularLocation>
        <location evidence="1">Cytoplasm</location>
    </subcellularLocation>
</comment>
<comment type="similarity">
    <text evidence="1">Belongs to the urease gamma subunit family.</text>
</comment>
<sequence length="100" mass="10955">MELTPREKDKLLLFTAGLVAERRLAKGLKLNYPESVALISCAIMEGAREGKTVAQLMSEGRAVLTAEQVMEGIPEMIKDIQVECTFPDGTKLVSIHDPIV</sequence>
<evidence type="ECO:0000255" key="1">
    <source>
        <dbReference type="HAMAP-Rule" id="MF_00739"/>
    </source>
</evidence>
<proteinExistence type="inferred from homology"/>
<dbReference type="EC" id="3.5.1.5" evidence="1"/>
<dbReference type="EMBL" id="X51816">
    <property type="protein sequence ID" value="CAA36113.1"/>
    <property type="molecule type" value="Genomic_DNA"/>
</dbReference>
<dbReference type="PIR" id="S08478">
    <property type="entry name" value="S08478"/>
</dbReference>
<dbReference type="RefSeq" id="WP_064718906.1">
    <property type="nucleotide sequence ID" value="NZ_PGWU01000002.1"/>
</dbReference>
<dbReference type="SMR" id="P16124"/>
<dbReference type="STRING" id="1354271.M997_0891"/>
<dbReference type="OrthoDB" id="9797217at2"/>
<dbReference type="UniPathway" id="UPA00258">
    <property type="reaction ID" value="UER00370"/>
</dbReference>
<dbReference type="GO" id="GO:0005737">
    <property type="term" value="C:cytoplasm"/>
    <property type="evidence" value="ECO:0007669"/>
    <property type="project" value="UniProtKB-SubCell"/>
</dbReference>
<dbReference type="GO" id="GO:0016151">
    <property type="term" value="F:nickel cation binding"/>
    <property type="evidence" value="ECO:0007669"/>
    <property type="project" value="InterPro"/>
</dbReference>
<dbReference type="GO" id="GO:0009039">
    <property type="term" value="F:urease activity"/>
    <property type="evidence" value="ECO:0007669"/>
    <property type="project" value="UniProtKB-UniRule"/>
</dbReference>
<dbReference type="GO" id="GO:0043419">
    <property type="term" value="P:urea catabolic process"/>
    <property type="evidence" value="ECO:0007669"/>
    <property type="project" value="UniProtKB-UniRule"/>
</dbReference>
<dbReference type="CDD" id="cd00390">
    <property type="entry name" value="Urease_gamma"/>
    <property type="match status" value="1"/>
</dbReference>
<dbReference type="Gene3D" id="3.30.280.10">
    <property type="entry name" value="Urease, gamma-like subunit"/>
    <property type="match status" value="1"/>
</dbReference>
<dbReference type="HAMAP" id="MF_00739">
    <property type="entry name" value="Urease_gamma"/>
    <property type="match status" value="1"/>
</dbReference>
<dbReference type="InterPro" id="IPR012010">
    <property type="entry name" value="Urease_gamma"/>
</dbReference>
<dbReference type="InterPro" id="IPR002026">
    <property type="entry name" value="Urease_gamma/gamma-beta_su"/>
</dbReference>
<dbReference type="InterPro" id="IPR036463">
    <property type="entry name" value="Urease_gamma_sf"/>
</dbReference>
<dbReference type="InterPro" id="IPR050069">
    <property type="entry name" value="Urease_subunit"/>
</dbReference>
<dbReference type="NCBIfam" id="NF009712">
    <property type="entry name" value="PRK13241.1"/>
    <property type="match status" value="1"/>
</dbReference>
<dbReference type="NCBIfam" id="TIGR00193">
    <property type="entry name" value="urease_gam"/>
    <property type="match status" value="1"/>
</dbReference>
<dbReference type="PANTHER" id="PTHR33569">
    <property type="entry name" value="UREASE"/>
    <property type="match status" value="1"/>
</dbReference>
<dbReference type="PANTHER" id="PTHR33569:SF1">
    <property type="entry name" value="UREASE"/>
    <property type="match status" value="1"/>
</dbReference>
<dbReference type="Pfam" id="PF00547">
    <property type="entry name" value="Urease_gamma"/>
    <property type="match status" value="1"/>
</dbReference>
<dbReference type="PIRSF" id="PIRSF001223">
    <property type="entry name" value="Urease_gamma"/>
    <property type="match status" value="1"/>
</dbReference>
<dbReference type="SUPFAM" id="SSF54111">
    <property type="entry name" value="Urease, gamma-subunit"/>
    <property type="match status" value="1"/>
</dbReference>
<name>URE3_PROHU</name>